<proteinExistence type="evidence at protein level"/>
<evidence type="ECO:0000250" key="1"/>
<evidence type="ECO:0000250" key="2">
    <source>
        <dbReference type="UniProtKB" id="Q91W69"/>
    </source>
</evidence>
<evidence type="ECO:0000255" key="3">
    <source>
        <dbReference type="PROSITE-ProRule" id="PRU00213"/>
    </source>
</evidence>
<evidence type="ECO:0000255" key="4">
    <source>
        <dbReference type="PROSITE-ProRule" id="PRU00243"/>
    </source>
</evidence>
<evidence type="ECO:0000256" key="5">
    <source>
        <dbReference type="SAM" id="MobiDB-lite"/>
    </source>
</evidence>
<evidence type="ECO:0000305" key="6"/>
<accession>Q4V882</accession>
<protein>
    <recommendedName>
        <fullName>Epsin-3</fullName>
    </recommendedName>
    <alternativeName>
        <fullName>EPS-15-interacting protein 3</fullName>
    </alternativeName>
</protein>
<dbReference type="EMBL" id="BC097500">
    <property type="protein sequence ID" value="AAH97500.1"/>
    <property type="molecule type" value="mRNA"/>
</dbReference>
<dbReference type="RefSeq" id="NP_001019962.1">
    <property type="nucleotide sequence ID" value="NM_001024791.1"/>
</dbReference>
<dbReference type="RefSeq" id="XP_006247265.1">
    <property type="nucleotide sequence ID" value="XM_006247203.5"/>
</dbReference>
<dbReference type="SMR" id="Q4V882"/>
<dbReference type="FunCoup" id="Q4V882">
    <property type="interactions" value="945"/>
</dbReference>
<dbReference type="STRING" id="10116.ENSRNOP00000004400"/>
<dbReference type="iPTMnet" id="Q4V882"/>
<dbReference type="PhosphoSitePlus" id="Q4V882"/>
<dbReference type="jPOST" id="Q4V882"/>
<dbReference type="PaxDb" id="10116-ENSRNOP00000004400"/>
<dbReference type="Ensembl" id="ENSRNOT00000004400.6">
    <property type="protein sequence ID" value="ENSRNOP00000004400.4"/>
    <property type="gene ID" value="ENSRNOG00000003284.7"/>
</dbReference>
<dbReference type="GeneID" id="360605"/>
<dbReference type="KEGG" id="rno:360605"/>
<dbReference type="AGR" id="RGD:1306416"/>
<dbReference type="CTD" id="55040"/>
<dbReference type="RGD" id="1306416">
    <property type="gene designation" value="Epn3"/>
</dbReference>
<dbReference type="eggNOG" id="KOG2056">
    <property type="taxonomic scope" value="Eukaryota"/>
</dbReference>
<dbReference type="GeneTree" id="ENSGT00940000158217"/>
<dbReference type="HOGENOM" id="CLU_012678_4_2_1"/>
<dbReference type="InParanoid" id="Q4V882"/>
<dbReference type="PRO" id="PR:Q4V882"/>
<dbReference type="Proteomes" id="UP000002494">
    <property type="component" value="Chromosome 10"/>
</dbReference>
<dbReference type="Bgee" id="ENSRNOG00000003284">
    <property type="expression patterns" value="Expressed in esophagus and 14 other cell types or tissues"/>
</dbReference>
<dbReference type="GO" id="GO:0005938">
    <property type="term" value="C:cell cortex"/>
    <property type="evidence" value="ECO:0007669"/>
    <property type="project" value="UniProtKB-SubCell"/>
</dbReference>
<dbReference type="GO" id="GO:0030125">
    <property type="term" value="C:clathrin vesicle coat"/>
    <property type="evidence" value="ECO:0000318"/>
    <property type="project" value="GO_Central"/>
</dbReference>
<dbReference type="GO" id="GO:0005905">
    <property type="term" value="C:clathrin-coated pit"/>
    <property type="evidence" value="ECO:0000266"/>
    <property type="project" value="RGD"/>
</dbReference>
<dbReference type="GO" id="GO:0030136">
    <property type="term" value="C:clathrin-coated vesicle"/>
    <property type="evidence" value="ECO:0000266"/>
    <property type="project" value="RGD"/>
</dbReference>
<dbReference type="GO" id="GO:0009898">
    <property type="term" value="C:cytoplasmic side of plasma membrane"/>
    <property type="evidence" value="ECO:0000266"/>
    <property type="project" value="RGD"/>
</dbReference>
<dbReference type="GO" id="GO:0005768">
    <property type="term" value="C:endosome"/>
    <property type="evidence" value="ECO:0000318"/>
    <property type="project" value="GO_Central"/>
</dbReference>
<dbReference type="GO" id="GO:0005634">
    <property type="term" value="C:nucleus"/>
    <property type="evidence" value="ECO:0000266"/>
    <property type="project" value="RGD"/>
</dbReference>
<dbReference type="GO" id="GO:0048471">
    <property type="term" value="C:perinuclear region of cytoplasm"/>
    <property type="evidence" value="ECO:0000266"/>
    <property type="project" value="RGD"/>
</dbReference>
<dbReference type="GO" id="GO:0005886">
    <property type="term" value="C:plasma membrane"/>
    <property type="evidence" value="ECO:0000318"/>
    <property type="project" value="GO_Central"/>
</dbReference>
<dbReference type="GO" id="GO:0030276">
    <property type="term" value="F:clathrin binding"/>
    <property type="evidence" value="ECO:0000318"/>
    <property type="project" value="GO_Central"/>
</dbReference>
<dbReference type="GO" id="GO:1990175">
    <property type="term" value="F:EH domain binding"/>
    <property type="evidence" value="ECO:0000266"/>
    <property type="project" value="RGD"/>
</dbReference>
<dbReference type="GO" id="GO:0005543">
    <property type="term" value="F:phospholipid binding"/>
    <property type="evidence" value="ECO:0000318"/>
    <property type="project" value="GO_Central"/>
</dbReference>
<dbReference type="GO" id="GO:0006897">
    <property type="term" value="P:endocytosis"/>
    <property type="evidence" value="ECO:0000318"/>
    <property type="project" value="GO_Central"/>
</dbReference>
<dbReference type="CDD" id="cd16990">
    <property type="entry name" value="ENTH_Epsin"/>
    <property type="match status" value="1"/>
</dbReference>
<dbReference type="FunFam" id="1.25.40.90:FF:000002">
    <property type="entry name" value="epsin-2 isoform X1"/>
    <property type="match status" value="1"/>
</dbReference>
<dbReference type="Gene3D" id="1.25.40.90">
    <property type="match status" value="1"/>
</dbReference>
<dbReference type="InterPro" id="IPR013809">
    <property type="entry name" value="ENTH"/>
</dbReference>
<dbReference type="InterPro" id="IPR008942">
    <property type="entry name" value="ENTH_VHS"/>
</dbReference>
<dbReference type="InterPro" id="IPR003903">
    <property type="entry name" value="UIM_dom"/>
</dbReference>
<dbReference type="PANTHER" id="PTHR12276:SF16">
    <property type="entry name" value="EPSIN-3"/>
    <property type="match status" value="1"/>
</dbReference>
<dbReference type="PANTHER" id="PTHR12276">
    <property type="entry name" value="EPSIN/ENT-RELATED"/>
    <property type="match status" value="1"/>
</dbReference>
<dbReference type="Pfam" id="PF01417">
    <property type="entry name" value="ENTH"/>
    <property type="match status" value="1"/>
</dbReference>
<dbReference type="SMART" id="SM00273">
    <property type="entry name" value="ENTH"/>
    <property type="match status" value="1"/>
</dbReference>
<dbReference type="SUPFAM" id="SSF48464">
    <property type="entry name" value="ENTH/VHS domain"/>
    <property type="match status" value="1"/>
</dbReference>
<dbReference type="PROSITE" id="PS50942">
    <property type="entry name" value="ENTH"/>
    <property type="match status" value="1"/>
</dbReference>
<dbReference type="PROSITE" id="PS50330">
    <property type="entry name" value="UIM"/>
    <property type="match status" value="1"/>
</dbReference>
<organism>
    <name type="scientific">Rattus norvegicus</name>
    <name type="common">Rat</name>
    <dbReference type="NCBI Taxonomy" id="10116"/>
    <lineage>
        <taxon>Eukaryota</taxon>
        <taxon>Metazoa</taxon>
        <taxon>Chordata</taxon>
        <taxon>Craniata</taxon>
        <taxon>Vertebrata</taxon>
        <taxon>Euteleostomi</taxon>
        <taxon>Mammalia</taxon>
        <taxon>Eutheria</taxon>
        <taxon>Euarchontoglires</taxon>
        <taxon>Glires</taxon>
        <taxon>Rodentia</taxon>
        <taxon>Myomorpha</taxon>
        <taxon>Muroidea</taxon>
        <taxon>Muridae</taxon>
        <taxon>Murinae</taxon>
        <taxon>Rattus</taxon>
    </lineage>
</organism>
<feature type="chain" id="PRO_0000312178" description="Epsin-3">
    <location>
        <begin position="1"/>
        <end position="608"/>
    </location>
</feature>
<feature type="domain" description="ENTH" evidence="4">
    <location>
        <begin position="12"/>
        <end position="144"/>
    </location>
</feature>
<feature type="domain" description="UIM" evidence="3">
    <location>
        <begin position="202"/>
        <end position="221"/>
    </location>
</feature>
<feature type="repeat" description="1">
    <location>
        <begin position="287"/>
        <end position="289"/>
    </location>
</feature>
<feature type="repeat" description="2">
    <location>
        <begin position="310"/>
        <end position="312"/>
    </location>
</feature>
<feature type="repeat" description="3">
    <location>
        <begin position="337"/>
        <end position="339"/>
    </location>
</feature>
<feature type="repeat" description="4">
    <location>
        <begin position="353"/>
        <end position="355"/>
    </location>
</feature>
<feature type="repeat" description="5">
    <location>
        <begin position="370"/>
        <end position="372"/>
    </location>
</feature>
<feature type="repeat" description="1">
    <location>
        <begin position="495"/>
        <end position="497"/>
    </location>
</feature>
<feature type="repeat" description="2">
    <location>
        <begin position="508"/>
        <end position="510"/>
    </location>
</feature>
<feature type="repeat" description="3">
    <location>
        <begin position="605"/>
        <end position="607"/>
    </location>
</feature>
<feature type="region of interest" description="Disordered" evidence="5">
    <location>
        <begin position="150"/>
        <end position="266"/>
    </location>
</feature>
<feature type="region of interest" description="Disordered" evidence="5">
    <location>
        <begin position="281"/>
        <end position="475"/>
    </location>
</feature>
<feature type="region of interest" description="5 X 3 AA repeats of [DE]-P-W">
    <location>
        <begin position="287"/>
        <end position="372"/>
    </location>
</feature>
<feature type="region of interest" description="3 X 3 AA repeats of N-P-F">
    <location>
        <begin position="495"/>
        <end position="607"/>
    </location>
</feature>
<feature type="region of interest" description="Disordered" evidence="5">
    <location>
        <begin position="498"/>
        <end position="530"/>
    </location>
</feature>
<feature type="region of interest" description="Disordered" evidence="5">
    <location>
        <begin position="575"/>
        <end position="608"/>
    </location>
</feature>
<feature type="compositionally biased region" description="Low complexity" evidence="5">
    <location>
        <begin position="174"/>
        <end position="189"/>
    </location>
</feature>
<feature type="compositionally biased region" description="Basic and acidic residues" evidence="5">
    <location>
        <begin position="214"/>
        <end position="229"/>
    </location>
</feature>
<feature type="compositionally biased region" description="Basic and acidic residues" evidence="5">
    <location>
        <begin position="240"/>
        <end position="260"/>
    </location>
</feature>
<feature type="compositionally biased region" description="Pro residues" evidence="5">
    <location>
        <begin position="346"/>
        <end position="363"/>
    </location>
</feature>
<feature type="compositionally biased region" description="Pro residues" evidence="5">
    <location>
        <begin position="578"/>
        <end position="588"/>
    </location>
</feature>
<feature type="binding site" evidence="1">
    <location>
        <position position="8"/>
    </location>
    <ligand>
        <name>a 1,2-diacyl-sn-glycero-3-phospho-(1D-myo-inositol-4,5-bisphosphate)</name>
        <dbReference type="ChEBI" id="CHEBI:58456"/>
    </ligand>
</feature>
<feature type="binding site" evidence="1">
    <location>
        <position position="11"/>
    </location>
    <ligand>
        <name>a 1,2-diacyl-sn-glycero-3-phospho-(1D-myo-inositol-4,5-bisphosphate)</name>
        <dbReference type="ChEBI" id="CHEBI:58456"/>
    </ligand>
</feature>
<feature type="binding site" evidence="1">
    <location>
        <position position="25"/>
    </location>
    <ligand>
        <name>a 1,2-diacyl-sn-glycero-3-phospho-(1D-myo-inositol-4,5-bisphosphate)</name>
        <dbReference type="ChEBI" id="CHEBI:58456"/>
    </ligand>
</feature>
<feature type="binding site" evidence="1">
    <location>
        <position position="30"/>
    </location>
    <ligand>
        <name>a 1,2-diacyl-sn-glycero-3-phospho-(1D-myo-inositol-4,5-bisphosphate)</name>
        <dbReference type="ChEBI" id="CHEBI:58456"/>
    </ligand>
</feature>
<feature type="binding site" evidence="1">
    <location>
        <position position="63"/>
    </location>
    <ligand>
        <name>a 1,2-diacyl-sn-glycero-3-phospho-(1D-myo-inositol-4,5-bisphosphate)</name>
        <dbReference type="ChEBI" id="CHEBI:58456"/>
    </ligand>
</feature>
<feature type="binding site" evidence="1">
    <location>
        <position position="73"/>
    </location>
    <ligand>
        <name>a 1,2-diacyl-sn-glycero-3-phospho-(1D-myo-inositol-4,5-bisphosphate)</name>
        <dbReference type="ChEBI" id="CHEBI:58456"/>
    </ligand>
</feature>
<feature type="modified residue" description="Phosphoserine" evidence="2">
    <location>
        <position position="184"/>
    </location>
</feature>
<feature type="modified residue" description="Phosphoserine" evidence="2">
    <location>
        <position position="185"/>
    </location>
</feature>
<comment type="subcellular location">
    <subcellularLocation>
        <location evidence="1">Cytoplasm</location>
        <location evidence="1">Cell cortex</location>
    </subcellularLocation>
    <subcellularLocation>
        <location evidence="1">Cytoplasm</location>
        <location evidence="1">Perinuclear region</location>
    </subcellularLocation>
    <subcellularLocation>
        <location evidence="1">Cytoplasmic vesicle</location>
        <location evidence="1">Clathrin-coated vesicle</location>
    </subcellularLocation>
    <subcellularLocation>
        <location evidence="1">Nucleus</location>
    </subcellularLocation>
    <text evidence="1">Concentrated in the perinuclear region and associated with clathrin-coated vesicles close to the cell periphery. May shuttle to the nucleus (By similarity).</text>
</comment>
<comment type="induction">
    <text>In keratinocytes, by wounding or contact with collagen.</text>
</comment>
<comment type="similarity">
    <text evidence="6">Belongs to the epsin family.</text>
</comment>
<sequence>MTTSALRRQVKNIVHNYSEAEIKVREATSNDPWGPPSSLMSEIADLTFNTVAFAEVMGMVWRRLNDSGKNWRHVYKALTLLDYLLKTGSERVAHQCRENLYTIQTLKDFQYIDRDGKDQGVNVREKVKQVMALLKDEERLRQERTHALKTKERMALEGMGIGSGQLGFSRRSRGSPSSYTSASSSPRYASDLEQARPQTSGEEELQLQLALAMSREEAEKGGRSWKGDDFPVANGAEPAGQRRRDREPEREERKEEEKLKTSQSSILDLADVFAPAPALPSTHCSADPWDIPGLRPNTEPSGSSWGPSADPWSPVPSGNALSRSQPWDLLPTLSSSEPWGRTPVLPSGPPITDPWAPSSPTPKLPSTGVDPWGASVETSNTSALGGASPFDPFAKPLESTEPMESRDSAQALPKGKSPSPVELDPFGDSSPSCKQNGVKETEALDLGVLGEALTQQPGKEARPCRTPESFLGPSASSLVNLDSLVKAPLAARTRNPFLTGLSAPSPTNPFGAGEQGRPTLNQMRTGSPALGLPPGGPVGVPLGSMTYSASLPLPLSSVPVGATLPASVSVFPQAGAFAPPPASLPQPLLPTSDPVGPLPPQAGTNPFL</sequence>
<gene>
    <name type="primary">Epn3</name>
</gene>
<name>EPN3_RAT</name>
<reference key="1">
    <citation type="journal article" date="2004" name="Genome Res.">
        <title>The status, quality, and expansion of the NIH full-length cDNA project: the Mammalian Gene Collection (MGC).</title>
        <authorList>
            <consortium name="The MGC Project Team"/>
        </authorList>
    </citation>
    <scope>NUCLEOTIDE SEQUENCE [LARGE SCALE MRNA]</scope>
    <source>
        <tissue>Placenta</tissue>
    </source>
</reference>
<reference key="2">
    <citation type="journal article" date="2012" name="Nat. Commun.">
        <title>Quantitative maps of protein phosphorylation sites across 14 different rat organs and tissues.</title>
        <authorList>
            <person name="Lundby A."/>
            <person name="Secher A."/>
            <person name="Lage K."/>
            <person name="Nordsborg N.B."/>
            <person name="Dmytriyev A."/>
            <person name="Lundby C."/>
            <person name="Olsen J.V."/>
        </authorList>
    </citation>
    <scope>IDENTIFICATION BY MASS SPECTROMETRY [LARGE SCALE ANALYSIS]</scope>
</reference>
<keyword id="KW-0963">Cytoplasm</keyword>
<keyword id="KW-0968">Cytoplasmic vesicle</keyword>
<keyword id="KW-0446">Lipid-binding</keyword>
<keyword id="KW-0539">Nucleus</keyword>
<keyword id="KW-0597">Phosphoprotein</keyword>
<keyword id="KW-1185">Reference proteome</keyword>
<keyword id="KW-0677">Repeat</keyword>